<name>RS6_RICRS</name>
<comment type="function">
    <text evidence="1">Binds together with bS18 to 16S ribosomal RNA.</text>
</comment>
<comment type="similarity">
    <text evidence="1">Belongs to the bacterial ribosomal protein bS6 family.</text>
</comment>
<reference key="1">
    <citation type="submission" date="2007-09" db="EMBL/GenBank/DDBJ databases">
        <title>Complete genome sequence of Rickettsia rickettsii.</title>
        <authorList>
            <person name="Madan A."/>
            <person name="Fahey J."/>
            <person name="Helton E."/>
            <person name="Ketteman M."/>
            <person name="Madan A."/>
            <person name="Rodrigues S."/>
            <person name="Sanchez A."/>
            <person name="Dasch G."/>
            <person name="Eremeeva M."/>
        </authorList>
    </citation>
    <scope>NUCLEOTIDE SEQUENCE [LARGE SCALE GENOMIC DNA]</scope>
    <source>
        <strain>Sheila Smith</strain>
    </source>
</reference>
<feature type="chain" id="PRO_1000005338" description="Small ribosomal subunit protein bS6">
    <location>
        <begin position="1"/>
        <end position="121"/>
    </location>
</feature>
<gene>
    <name evidence="1" type="primary">rpsF</name>
    <name type="ordered locus">A1G_00405</name>
</gene>
<proteinExistence type="inferred from homology"/>
<protein>
    <recommendedName>
        <fullName evidence="1">Small ribosomal subunit protein bS6</fullName>
    </recommendedName>
    <alternativeName>
        <fullName evidence="2">30S ribosomal protein S6</fullName>
    </alternativeName>
</protein>
<accession>A8GQJ4</accession>
<keyword id="KW-0687">Ribonucleoprotein</keyword>
<keyword id="KW-0689">Ribosomal protein</keyword>
<keyword id="KW-0694">RNA-binding</keyword>
<keyword id="KW-0699">rRNA-binding</keyword>
<organism>
    <name type="scientific">Rickettsia rickettsii (strain Sheila Smith)</name>
    <dbReference type="NCBI Taxonomy" id="392021"/>
    <lineage>
        <taxon>Bacteria</taxon>
        <taxon>Pseudomonadati</taxon>
        <taxon>Pseudomonadota</taxon>
        <taxon>Alphaproteobacteria</taxon>
        <taxon>Rickettsiales</taxon>
        <taxon>Rickettsiaceae</taxon>
        <taxon>Rickettsieae</taxon>
        <taxon>Rickettsia</taxon>
        <taxon>spotted fever group</taxon>
    </lineage>
</organism>
<dbReference type="EMBL" id="CP000848">
    <property type="protein sequence ID" value="ABV75669.1"/>
    <property type="molecule type" value="Genomic_DNA"/>
</dbReference>
<dbReference type="RefSeq" id="WP_012150292.1">
    <property type="nucleotide sequence ID" value="NZ_CP121767.1"/>
</dbReference>
<dbReference type="SMR" id="A8GQJ4"/>
<dbReference type="GeneID" id="79936866"/>
<dbReference type="KEGG" id="rri:A1G_00405"/>
<dbReference type="HOGENOM" id="CLU_113441_2_0_5"/>
<dbReference type="Proteomes" id="UP000006832">
    <property type="component" value="Chromosome"/>
</dbReference>
<dbReference type="GO" id="GO:0005737">
    <property type="term" value="C:cytoplasm"/>
    <property type="evidence" value="ECO:0007669"/>
    <property type="project" value="UniProtKB-ARBA"/>
</dbReference>
<dbReference type="GO" id="GO:1990904">
    <property type="term" value="C:ribonucleoprotein complex"/>
    <property type="evidence" value="ECO:0007669"/>
    <property type="project" value="UniProtKB-KW"/>
</dbReference>
<dbReference type="GO" id="GO:0005840">
    <property type="term" value="C:ribosome"/>
    <property type="evidence" value="ECO:0007669"/>
    <property type="project" value="UniProtKB-KW"/>
</dbReference>
<dbReference type="GO" id="GO:0070181">
    <property type="term" value="F:small ribosomal subunit rRNA binding"/>
    <property type="evidence" value="ECO:0007669"/>
    <property type="project" value="TreeGrafter"/>
</dbReference>
<dbReference type="GO" id="GO:0003735">
    <property type="term" value="F:structural constituent of ribosome"/>
    <property type="evidence" value="ECO:0007669"/>
    <property type="project" value="InterPro"/>
</dbReference>
<dbReference type="GO" id="GO:0006412">
    <property type="term" value="P:translation"/>
    <property type="evidence" value="ECO:0007669"/>
    <property type="project" value="UniProtKB-UniRule"/>
</dbReference>
<dbReference type="CDD" id="cd00473">
    <property type="entry name" value="bS6"/>
    <property type="match status" value="1"/>
</dbReference>
<dbReference type="Gene3D" id="3.30.70.60">
    <property type="match status" value="1"/>
</dbReference>
<dbReference type="HAMAP" id="MF_00360">
    <property type="entry name" value="Ribosomal_bS6"/>
    <property type="match status" value="1"/>
</dbReference>
<dbReference type="InterPro" id="IPR000529">
    <property type="entry name" value="Ribosomal_bS6"/>
</dbReference>
<dbReference type="InterPro" id="IPR035980">
    <property type="entry name" value="Ribosomal_bS6_sf"/>
</dbReference>
<dbReference type="InterPro" id="IPR020814">
    <property type="entry name" value="Ribosomal_S6_plastid/chlpt"/>
</dbReference>
<dbReference type="InterPro" id="IPR014717">
    <property type="entry name" value="Transl_elong_EF1B/ribsomal_bS6"/>
</dbReference>
<dbReference type="NCBIfam" id="TIGR00166">
    <property type="entry name" value="S6"/>
    <property type="match status" value="1"/>
</dbReference>
<dbReference type="PANTHER" id="PTHR21011">
    <property type="entry name" value="MITOCHONDRIAL 28S RIBOSOMAL PROTEIN S6"/>
    <property type="match status" value="1"/>
</dbReference>
<dbReference type="PANTHER" id="PTHR21011:SF1">
    <property type="entry name" value="SMALL RIBOSOMAL SUBUNIT PROTEIN BS6M"/>
    <property type="match status" value="1"/>
</dbReference>
<dbReference type="Pfam" id="PF01250">
    <property type="entry name" value="Ribosomal_S6"/>
    <property type="match status" value="1"/>
</dbReference>
<dbReference type="SUPFAM" id="SSF54995">
    <property type="entry name" value="Ribosomal protein S6"/>
    <property type="match status" value="1"/>
</dbReference>
<evidence type="ECO:0000255" key="1">
    <source>
        <dbReference type="HAMAP-Rule" id="MF_00360"/>
    </source>
</evidence>
<evidence type="ECO:0000305" key="2"/>
<sequence>MSFYESVFIIRQDVSLNDIDKIVDDFAKIIKDNNGTIIKKEYWGLRTLAYKIGNNKKGHYYFLGLDITGNVKEELERKMKLNENIIRFLTIQADSISSEPSPILKNQSTENAPVIDVTINN</sequence>